<keyword id="KW-0030">Aminoacyl-tRNA synthetase</keyword>
<keyword id="KW-0067">ATP-binding</keyword>
<keyword id="KW-0963">Cytoplasm</keyword>
<keyword id="KW-0436">Ligase</keyword>
<keyword id="KW-0460">Magnesium</keyword>
<keyword id="KW-0479">Metal-binding</keyword>
<keyword id="KW-0547">Nucleotide-binding</keyword>
<keyword id="KW-0648">Protein biosynthesis</keyword>
<gene>
    <name evidence="1" type="primary">pheS</name>
    <name type="ordered locus">VC0395_A0843</name>
    <name type="ordered locus">VC395_1338</name>
</gene>
<dbReference type="EC" id="6.1.1.20" evidence="1"/>
<dbReference type="EMBL" id="CP000627">
    <property type="protein sequence ID" value="ABQ19498.1"/>
    <property type="molecule type" value="Genomic_DNA"/>
</dbReference>
<dbReference type="EMBL" id="CP001235">
    <property type="protein sequence ID" value="ACP09346.1"/>
    <property type="molecule type" value="Genomic_DNA"/>
</dbReference>
<dbReference type="RefSeq" id="WP_001164219.1">
    <property type="nucleotide sequence ID" value="NZ_JAACZH010000002.1"/>
</dbReference>
<dbReference type="SMR" id="A5F1W4"/>
<dbReference type="KEGG" id="vco:VC0395_A0843"/>
<dbReference type="KEGG" id="vcr:VC395_1338"/>
<dbReference type="PATRIC" id="fig|345073.21.peg.1302"/>
<dbReference type="eggNOG" id="COG0016">
    <property type="taxonomic scope" value="Bacteria"/>
</dbReference>
<dbReference type="HOGENOM" id="CLU_025086_0_1_6"/>
<dbReference type="OrthoDB" id="9800719at2"/>
<dbReference type="Proteomes" id="UP000000249">
    <property type="component" value="Chromosome 2"/>
</dbReference>
<dbReference type="GO" id="GO:0005737">
    <property type="term" value="C:cytoplasm"/>
    <property type="evidence" value="ECO:0007669"/>
    <property type="project" value="UniProtKB-SubCell"/>
</dbReference>
<dbReference type="GO" id="GO:0005524">
    <property type="term" value="F:ATP binding"/>
    <property type="evidence" value="ECO:0007669"/>
    <property type="project" value="UniProtKB-UniRule"/>
</dbReference>
<dbReference type="GO" id="GO:0000287">
    <property type="term" value="F:magnesium ion binding"/>
    <property type="evidence" value="ECO:0007669"/>
    <property type="project" value="UniProtKB-UniRule"/>
</dbReference>
<dbReference type="GO" id="GO:0004826">
    <property type="term" value="F:phenylalanine-tRNA ligase activity"/>
    <property type="evidence" value="ECO:0007669"/>
    <property type="project" value="UniProtKB-UniRule"/>
</dbReference>
<dbReference type="GO" id="GO:0000049">
    <property type="term" value="F:tRNA binding"/>
    <property type="evidence" value="ECO:0007669"/>
    <property type="project" value="InterPro"/>
</dbReference>
<dbReference type="GO" id="GO:0006432">
    <property type="term" value="P:phenylalanyl-tRNA aminoacylation"/>
    <property type="evidence" value="ECO:0007669"/>
    <property type="project" value="UniProtKB-UniRule"/>
</dbReference>
<dbReference type="CDD" id="cd00496">
    <property type="entry name" value="PheRS_alpha_core"/>
    <property type="match status" value="1"/>
</dbReference>
<dbReference type="FunFam" id="3.30.930.10:FF:000003">
    <property type="entry name" value="Phenylalanine--tRNA ligase alpha subunit"/>
    <property type="match status" value="1"/>
</dbReference>
<dbReference type="Gene3D" id="3.30.930.10">
    <property type="entry name" value="Bira Bifunctional Protein, Domain 2"/>
    <property type="match status" value="1"/>
</dbReference>
<dbReference type="HAMAP" id="MF_00281">
    <property type="entry name" value="Phe_tRNA_synth_alpha1"/>
    <property type="match status" value="1"/>
</dbReference>
<dbReference type="InterPro" id="IPR006195">
    <property type="entry name" value="aa-tRNA-synth_II"/>
</dbReference>
<dbReference type="InterPro" id="IPR045864">
    <property type="entry name" value="aa-tRNA-synth_II/BPL/LPL"/>
</dbReference>
<dbReference type="InterPro" id="IPR004529">
    <property type="entry name" value="Phe-tRNA-synth_IIc_asu"/>
</dbReference>
<dbReference type="InterPro" id="IPR004188">
    <property type="entry name" value="Phe-tRNA_ligase_II_N"/>
</dbReference>
<dbReference type="InterPro" id="IPR022911">
    <property type="entry name" value="Phe_tRNA_ligase_alpha1_bac"/>
</dbReference>
<dbReference type="InterPro" id="IPR002319">
    <property type="entry name" value="Phenylalanyl-tRNA_Synthase"/>
</dbReference>
<dbReference type="InterPro" id="IPR010978">
    <property type="entry name" value="tRNA-bd_arm"/>
</dbReference>
<dbReference type="NCBIfam" id="TIGR00468">
    <property type="entry name" value="pheS"/>
    <property type="match status" value="1"/>
</dbReference>
<dbReference type="PANTHER" id="PTHR11538:SF41">
    <property type="entry name" value="PHENYLALANINE--TRNA LIGASE, MITOCHONDRIAL"/>
    <property type="match status" value="1"/>
</dbReference>
<dbReference type="PANTHER" id="PTHR11538">
    <property type="entry name" value="PHENYLALANYL-TRNA SYNTHETASE"/>
    <property type="match status" value="1"/>
</dbReference>
<dbReference type="Pfam" id="PF02912">
    <property type="entry name" value="Phe_tRNA-synt_N"/>
    <property type="match status" value="1"/>
</dbReference>
<dbReference type="Pfam" id="PF01409">
    <property type="entry name" value="tRNA-synt_2d"/>
    <property type="match status" value="1"/>
</dbReference>
<dbReference type="SUPFAM" id="SSF55681">
    <property type="entry name" value="Class II aaRS and biotin synthetases"/>
    <property type="match status" value="1"/>
</dbReference>
<dbReference type="SUPFAM" id="SSF46589">
    <property type="entry name" value="tRNA-binding arm"/>
    <property type="match status" value="1"/>
</dbReference>
<dbReference type="PROSITE" id="PS50862">
    <property type="entry name" value="AA_TRNA_LIGASE_II"/>
    <property type="match status" value="1"/>
</dbReference>
<evidence type="ECO:0000255" key="1">
    <source>
        <dbReference type="HAMAP-Rule" id="MF_00281"/>
    </source>
</evidence>
<protein>
    <recommendedName>
        <fullName evidence="1">Phenylalanine--tRNA ligase alpha subunit</fullName>
        <ecNumber evidence="1">6.1.1.20</ecNumber>
    </recommendedName>
    <alternativeName>
        <fullName evidence="1">Phenylalanyl-tRNA synthetase alpha subunit</fullName>
        <shortName evidence="1">PheRS</shortName>
    </alternativeName>
</protein>
<comment type="catalytic activity">
    <reaction evidence="1">
        <text>tRNA(Phe) + L-phenylalanine + ATP = L-phenylalanyl-tRNA(Phe) + AMP + diphosphate + H(+)</text>
        <dbReference type="Rhea" id="RHEA:19413"/>
        <dbReference type="Rhea" id="RHEA-COMP:9668"/>
        <dbReference type="Rhea" id="RHEA-COMP:9699"/>
        <dbReference type="ChEBI" id="CHEBI:15378"/>
        <dbReference type="ChEBI" id="CHEBI:30616"/>
        <dbReference type="ChEBI" id="CHEBI:33019"/>
        <dbReference type="ChEBI" id="CHEBI:58095"/>
        <dbReference type="ChEBI" id="CHEBI:78442"/>
        <dbReference type="ChEBI" id="CHEBI:78531"/>
        <dbReference type="ChEBI" id="CHEBI:456215"/>
        <dbReference type="EC" id="6.1.1.20"/>
    </reaction>
</comment>
<comment type="cofactor">
    <cofactor evidence="1">
        <name>Mg(2+)</name>
        <dbReference type="ChEBI" id="CHEBI:18420"/>
    </cofactor>
    <text evidence="1">Binds 2 magnesium ions per tetramer.</text>
</comment>
<comment type="subunit">
    <text evidence="1">Tetramer of two alpha and two beta subunits.</text>
</comment>
<comment type="subcellular location">
    <subcellularLocation>
        <location evidence="1">Cytoplasm</location>
    </subcellularLocation>
</comment>
<comment type="similarity">
    <text evidence="1">Belongs to the class-II aminoacyl-tRNA synthetase family. Phe-tRNA synthetase alpha subunit type 1 subfamily.</text>
</comment>
<accession>A5F1W4</accession>
<accession>C3LZY0</accession>
<organism>
    <name type="scientific">Vibrio cholerae serotype O1 (strain ATCC 39541 / Classical Ogawa 395 / O395)</name>
    <dbReference type="NCBI Taxonomy" id="345073"/>
    <lineage>
        <taxon>Bacteria</taxon>
        <taxon>Pseudomonadati</taxon>
        <taxon>Pseudomonadota</taxon>
        <taxon>Gammaproteobacteria</taxon>
        <taxon>Vibrionales</taxon>
        <taxon>Vibrionaceae</taxon>
        <taxon>Vibrio</taxon>
    </lineage>
</organism>
<feature type="chain" id="PRO_1000071937" description="Phenylalanine--tRNA ligase alpha subunit">
    <location>
        <begin position="1"/>
        <end position="327"/>
    </location>
</feature>
<feature type="binding site" evidence="1">
    <location>
        <position position="252"/>
    </location>
    <ligand>
        <name>Mg(2+)</name>
        <dbReference type="ChEBI" id="CHEBI:18420"/>
        <note>shared with beta subunit</note>
    </ligand>
</feature>
<sequence>MQHLQEIIANATSAINAAESLVALDEVRVQYLGKKGELTVQLQSLGKLPPEERRTAGQEINVAKEAVQKALAERKDALQSAELEAKLAAETIDVTLPGRRIENGGLHPVTRTIERIESFFGELGFTVESGPEIEDDFHNFDALNIAADHPARTDHDTFFFNPKLMLRTHTSGVQIRTLEERQPPLRFIAPGRVYRNDYDQTHTPMFHQVEGMLVDENVNFAQLKGILHDFLCNFFEEDLEVRFRPSYFPFTEPSAEVDVKGKNGKWLEVLGCGMVHPNVLRSVGIDPEKYSGFAFGMGVERLTMLRYGVNDLRAFFENDLRFLKQFK</sequence>
<reference key="1">
    <citation type="submission" date="2007-03" db="EMBL/GenBank/DDBJ databases">
        <authorList>
            <person name="Heidelberg J."/>
        </authorList>
    </citation>
    <scope>NUCLEOTIDE SEQUENCE [LARGE SCALE GENOMIC DNA]</scope>
    <source>
        <strain>ATCC 39541 / Classical Ogawa 395 / O395</strain>
    </source>
</reference>
<reference key="2">
    <citation type="journal article" date="2008" name="PLoS ONE">
        <title>A recalibrated molecular clock and independent origins for the cholera pandemic clones.</title>
        <authorList>
            <person name="Feng L."/>
            <person name="Reeves P.R."/>
            <person name="Lan R."/>
            <person name="Ren Y."/>
            <person name="Gao C."/>
            <person name="Zhou Z."/>
            <person name="Ren Y."/>
            <person name="Cheng J."/>
            <person name="Wang W."/>
            <person name="Wang J."/>
            <person name="Qian W."/>
            <person name="Li D."/>
            <person name="Wang L."/>
        </authorList>
    </citation>
    <scope>NUCLEOTIDE SEQUENCE [LARGE SCALE GENOMIC DNA]</scope>
    <source>
        <strain>ATCC 39541 / Classical Ogawa 395 / O395</strain>
    </source>
</reference>
<proteinExistence type="inferred from homology"/>
<name>SYFA_VIBC3</name>